<protein>
    <recommendedName>
        <fullName evidence="1">UvrABC system protein C</fullName>
        <shortName evidence="1">Protein UvrC</shortName>
    </recommendedName>
    <alternativeName>
        <fullName evidence="1">Excinuclease ABC subunit C</fullName>
    </alternativeName>
</protein>
<reference key="1">
    <citation type="journal article" date="2009" name="BMC Genomics">
        <title>Analysis of the Rickettsia africae genome reveals that virulence acquisition in Rickettsia species may be explained by genome reduction.</title>
        <authorList>
            <person name="Fournier P.-E."/>
            <person name="El Karkouri K."/>
            <person name="Leroy Q."/>
            <person name="Robert C."/>
            <person name="Giumelli B."/>
            <person name="Renesto P."/>
            <person name="Socolovschi C."/>
            <person name="Parola P."/>
            <person name="Audic S."/>
            <person name="Raoult D."/>
        </authorList>
    </citation>
    <scope>NUCLEOTIDE SEQUENCE [LARGE SCALE GENOMIC DNA]</scope>
    <source>
        <strain>ESF-5</strain>
    </source>
</reference>
<sequence length="639" mass="73289">MTLEITGSELIKSKLIDAPERSGVYRMFDVNKQVLYVGKAKNLKKRLTNYIKSNLDNKTLRMIANTCFLEYSITNSEVEALLLEAQLIKKFQPKFNILLKDCKSFPFIKLRLDHDFPQLLKYRGKTLSDGKFFGPFASSAEVNTTLTELQKIFKLRSCTDNYFNSRTRPCLQYEIKRCYAPCVGKINKEDYRDLVTQVKDFLQGRTKELQENLSRKMEELSSQMRFEEAAEIRDRIKALSYVQLKAGVSDVVKDADIIAIVEKNGHYCVEVFLYRAGQACGNIPYFPTSTENSTKEEVLEYFLLQFYQKQHVPAAIIINHEINDKENVIEAIKKINNILQINITVPNKGGKAKLVQNAETNALFSLEQYLKKFAKNQEIMFEIKELFGLSEIPERIEIYDNSHIQGKFAVGVMVVAGKVGFDKKEYRVFNVHAPSLVCHSRESGDPKRLMDSCFRGNGIKNCGGDIKGDDYEMLRQVLTRRLTRLRQEPHKLPSLMIIDGGKGHLGVVKEVMDKFEMNIPFVCMSKGVDRNAGFEQFHVIGKEVFTLDKNLPVMKYLQILRDEAHNFAIKNHRLGRSRAIKISRLDDIEGVGETRKKALLHYFGSYKAVCDATIYELAKVNGINKLLAEMIFNVLHRKN</sequence>
<gene>
    <name evidence="1" type="primary">uvrC</name>
    <name type="ordered locus">RAF_ORF0784</name>
</gene>
<organism>
    <name type="scientific">Rickettsia africae (strain ESF-5)</name>
    <dbReference type="NCBI Taxonomy" id="347255"/>
    <lineage>
        <taxon>Bacteria</taxon>
        <taxon>Pseudomonadati</taxon>
        <taxon>Pseudomonadota</taxon>
        <taxon>Alphaproteobacteria</taxon>
        <taxon>Rickettsiales</taxon>
        <taxon>Rickettsiaceae</taxon>
        <taxon>Rickettsieae</taxon>
        <taxon>Rickettsia</taxon>
        <taxon>spotted fever group</taxon>
    </lineage>
</organism>
<feature type="chain" id="PRO_1000204126" description="UvrABC system protein C">
    <location>
        <begin position="1"/>
        <end position="639"/>
    </location>
</feature>
<feature type="domain" description="GIY-YIG" evidence="1">
    <location>
        <begin position="20"/>
        <end position="97"/>
    </location>
</feature>
<feature type="domain" description="UVR" evidence="1">
    <location>
        <begin position="207"/>
        <end position="242"/>
    </location>
</feature>
<name>UVRC_RICAE</name>
<accession>C3PP03</accession>
<proteinExistence type="inferred from homology"/>
<comment type="function">
    <text evidence="1">The UvrABC repair system catalyzes the recognition and processing of DNA lesions. UvrC both incises the 5' and 3' sides of the lesion. The N-terminal half is responsible for the 3' incision and the C-terminal half is responsible for the 5' incision.</text>
</comment>
<comment type="subunit">
    <text evidence="1">Interacts with UvrB in an incision complex.</text>
</comment>
<comment type="subcellular location">
    <subcellularLocation>
        <location evidence="1">Cytoplasm</location>
    </subcellularLocation>
</comment>
<comment type="similarity">
    <text evidence="1">Belongs to the UvrC family.</text>
</comment>
<dbReference type="EMBL" id="CP001612">
    <property type="protein sequence ID" value="ACP53663.1"/>
    <property type="molecule type" value="Genomic_DNA"/>
</dbReference>
<dbReference type="RefSeq" id="WP_012719854.1">
    <property type="nucleotide sequence ID" value="NC_012633.1"/>
</dbReference>
<dbReference type="SMR" id="C3PP03"/>
<dbReference type="KEGG" id="raf:RAF_ORF0784"/>
<dbReference type="HOGENOM" id="CLU_014841_3_2_5"/>
<dbReference type="Proteomes" id="UP000002305">
    <property type="component" value="Chromosome"/>
</dbReference>
<dbReference type="GO" id="GO:0005737">
    <property type="term" value="C:cytoplasm"/>
    <property type="evidence" value="ECO:0007669"/>
    <property type="project" value="UniProtKB-SubCell"/>
</dbReference>
<dbReference type="GO" id="GO:0009380">
    <property type="term" value="C:excinuclease repair complex"/>
    <property type="evidence" value="ECO:0007669"/>
    <property type="project" value="InterPro"/>
</dbReference>
<dbReference type="GO" id="GO:0003677">
    <property type="term" value="F:DNA binding"/>
    <property type="evidence" value="ECO:0007669"/>
    <property type="project" value="UniProtKB-UniRule"/>
</dbReference>
<dbReference type="GO" id="GO:0009381">
    <property type="term" value="F:excinuclease ABC activity"/>
    <property type="evidence" value="ECO:0007669"/>
    <property type="project" value="UniProtKB-UniRule"/>
</dbReference>
<dbReference type="GO" id="GO:0006289">
    <property type="term" value="P:nucleotide-excision repair"/>
    <property type="evidence" value="ECO:0007669"/>
    <property type="project" value="UniProtKB-UniRule"/>
</dbReference>
<dbReference type="GO" id="GO:0009432">
    <property type="term" value="P:SOS response"/>
    <property type="evidence" value="ECO:0007669"/>
    <property type="project" value="UniProtKB-UniRule"/>
</dbReference>
<dbReference type="CDD" id="cd10434">
    <property type="entry name" value="GIY-YIG_UvrC_Cho"/>
    <property type="match status" value="1"/>
</dbReference>
<dbReference type="FunFam" id="3.40.1440.10:FF:000001">
    <property type="entry name" value="UvrABC system protein C"/>
    <property type="match status" value="1"/>
</dbReference>
<dbReference type="Gene3D" id="1.10.150.20">
    <property type="entry name" value="5' to 3' exonuclease, C-terminal subdomain"/>
    <property type="match status" value="1"/>
</dbReference>
<dbReference type="Gene3D" id="3.40.1440.10">
    <property type="entry name" value="GIY-YIG endonuclease"/>
    <property type="match status" value="1"/>
</dbReference>
<dbReference type="Gene3D" id="4.10.860.10">
    <property type="entry name" value="UVR domain"/>
    <property type="match status" value="1"/>
</dbReference>
<dbReference type="Gene3D" id="3.30.420.340">
    <property type="entry name" value="UvrC, RNAse H endonuclease domain"/>
    <property type="match status" value="1"/>
</dbReference>
<dbReference type="HAMAP" id="MF_00203">
    <property type="entry name" value="UvrC"/>
    <property type="match status" value="1"/>
</dbReference>
<dbReference type="InterPro" id="IPR000305">
    <property type="entry name" value="GIY-YIG_endonuc"/>
</dbReference>
<dbReference type="InterPro" id="IPR035901">
    <property type="entry name" value="GIY-YIG_endonuc_sf"/>
</dbReference>
<dbReference type="InterPro" id="IPR047296">
    <property type="entry name" value="GIY-YIG_UvrC_Cho"/>
</dbReference>
<dbReference type="InterPro" id="IPR010994">
    <property type="entry name" value="RuvA_2-like"/>
</dbReference>
<dbReference type="InterPro" id="IPR001943">
    <property type="entry name" value="UVR_dom"/>
</dbReference>
<dbReference type="InterPro" id="IPR036876">
    <property type="entry name" value="UVR_dom_sf"/>
</dbReference>
<dbReference type="InterPro" id="IPR050066">
    <property type="entry name" value="UvrABC_protein_C"/>
</dbReference>
<dbReference type="InterPro" id="IPR004791">
    <property type="entry name" value="UvrC"/>
</dbReference>
<dbReference type="InterPro" id="IPR001162">
    <property type="entry name" value="UvrC_RNase_H_dom"/>
</dbReference>
<dbReference type="InterPro" id="IPR038476">
    <property type="entry name" value="UvrC_RNase_H_dom_sf"/>
</dbReference>
<dbReference type="NCBIfam" id="TIGR00194">
    <property type="entry name" value="uvrC"/>
    <property type="match status" value="1"/>
</dbReference>
<dbReference type="PANTHER" id="PTHR30562:SF1">
    <property type="entry name" value="UVRABC SYSTEM PROTEIN C"/>
    <property type="match status" value="1"/>
</dbReference>
<dbReference type="PANTHER" id="PTHR30562">
    <property type="entry name" value="UVRC/OXIDOREDUCTASE"/>
    <property type="match status" value="1"/>
</dbReference>
<dbReference type="Pfam" id="PF01541">
    <property type="entry name" value="GIY-YIG"/>
    <property type="match status" value="1"/>
</dbReference>
<dbReference type="Pfam" id="PF14520">
    <property type="entry name" value="HHH_5"/>
    <property type="match status" value="1"/>
</dbReference>
<dbReference type="Pfam" id="PF02151">
    <property type="entry name" value="UVR"/>
    <property type="match status" value="1"/>
</dbReference>
<dbReference type="Pfam" id="PF22920">
    <property type="entry name" value="UvrC_RNaseH"/>
    <property type="match status" value="1"/>
</dbReference>
<dbReference type="Pfam" id="PF08459">
    <property type="entry name" value="UvrC_RNaseH_dom"/>
    <property type="match status" value="2"/>
</dbReference>
<dbReference type="SMART" id="SM00465">
    <property type="entry name" value="GIYc"/>
    <property type="match status" value="1"/>
</dbReference>
<dbReference type="SUPFAM" id="SSF46600">
    <property type="entry name" value="C-terminal UvrC-binding domain of UvrB"/>
    <property type="match status" value="1"/>
</dbReference>
<dbReference type="SUPFAM" id="SSF82771">
    <property type="entry name" value="GIY-YIG endonuclease"/>
    <property type="match status" value="1"/>
</dbReference>
<dbReference type="SUPFAM" id="SSF47781">
    <property type="entry name" value="RuvA domain 2-like"/>
    <property type="match status" value="1"/>
</dbReference>
<dbReference type="PROSITE" id="PS50164">
    <property type="entry name" value="GIY_YIG"/>
    <property type="match status" value="1"/>
</dbReference>
<dbReference type="PROSITE" id="PS50151">
    <property type="entry name" value="UVR"/>
    <property type="match status" value="1"/>
</dbReference>
<dbReference type="PROSITE" id="PS50165">
    <property type="entry name" value="UVRC"/>
    <property type="match status" value="1"/>
</dbReference>
<evidence type="ECO:0000255" key="1">
    <source>
        <dbReference type="HAMAP-Rule" id="MF_00203"/>
    </source>
</evidence>
<keyword id="KW-0963">Cytoplasm</keyword>
<keyword id="KW-0227">DNA damage</keyword>
<keyword id="KW-0228">DNA excision</keyword>
<keyword id="KW-0234">DNA repair</keyword>
<keyword id="KW-0267">Excision nuclease</keyword>
<keyword id="KW-0742">SOS response</keyword>